<sequence length="144" mass="15756">MAFSSLLSRSSYIPMDFIIARCRARSTKQKTYAPVCQASTTISSRCSLVGMMQRSPSRSSASSINTMYSAIIPHSVVINLKHANSRSRSSSAVLRASPVCGLTISSTDRIARCTLTCVARSGQMYQISSMPFARRLNRYPDTTS</sequence>
<comment type="miscellaneous">
    <text>Plasmid Clo DF13 originates from Enterobacter cloacae but is stably maintained and mostly studied in E.coli.</text>
</comment>
<accession>P13809</accession>
<protein>
    <recommendedName>
        <fullName>Protein D</fullName>
    </recommendedName>
</protein>
<gene>
    <name type="primary">D</name>
    <name type="synonym">rpi</name>
</gene>
<keyword id="KW-0614">Plasmid</keyword>
<proteinExistence type="predicted"/>
<feature type="chain" id="PRO_0000068357" description="Protein D">
    <location>
        <begin position="1"/>
        <end position="144"/>
    </location>
</feature>
<organism>
    <name type="scientific">Escherichia coli</name>
    <dbReference type="NCBI Taxonomy" id="562"/>
    <lineage>
        <taxon>Bacteria</taxon>
        <taxon>Pseudomonadati</taxon>
        <taxon>Pseudomonadota</taxon>
        <taxon>Gammaproteobacteria</taxon>
        <taxon>Enterobacterales</taxon>
        <taxon>Enterobacteriaceae</taxon>
        <taxon>Escherichia</taxon>
    </lineage>
</organism>
<dbReference type="EMBL" id="X04466">
    <property type="protein sequence ID" value="CAA28150.1"/>
    <property type="molecule type" value="Genomic_DNA"/>
</dbReference>
<dbReference type="PIR" id="F28585">
    <property type="entry name" value="F28585"/>
</dbReference>
<dbReference type="RefSeq" id="NP_052375.1">
    <property type="nucleotide sequence ID" value="NC_002119.1"/>
</dbReference>
<geneLocation type="plasmid">
    <name>Clo DF13</name>
</geneLocation>
<reference key="1">
    <citation type="journal article" date="1986" name="Plasmid">
        <title>The complete nucleotide sequence of the bacteriocinogenic plasmid CloDF13.</title>
        <authorList>
            <person name="Nijkamp H.J.J."/>
            <person name="de Lang R."/>
            <person name="Stuitje A.R."/>
            <person name="van den Elsen P.J.M."/>
            <person name="Veltkamp E."/>
            <person name="van Putten A.J."/>
        </authorList>
    </citation>
    <scope>NUCLEOTIDE SEQUENCE [GENOMIC DNA]</scope>
</reference>
<name>RPI_ECOLX</name>